<gene>
    <name type="ordered locus">PM1514</name>
</gene>
<organism>
    <name type="scientific">Pasteurella multocida (strain Pm70)</name>
    <dbReference type="NCBI Taxonomy" id="272843"/>
    <lineage>
        <taxon>Bacteria</taxon>
        <taxon>Pseudomonadati</taxon>
        <taxon>Pseudomonadota</taxon>
        <taxon>Gammaproteobacteria</taxon>
        <taxon>Pasteurellales</taxon>
        <taxon>Pasteurellaceae</taxon>
        <taxon>Pasteurella</taxon>
    </lineage>
</organism>
<feature type="signal peptide" evidence="1">
    <location>
        <begin position="1"/>
        <end position="20"/>
    </location>
</feature>
<feature type="chain" id="PRO_0000450810" description="Outer membrane lipoprotein PM1514" evidence="1">
    <location>
        <begin position="21"/>
        <end position="331"/>
    </location>
</feature>
<feature type="lipid moiety-binding region" description="N-palmitoyl cysteine" evidence="1">
    <location>
        <position position="21"/>
    </location>
</feature>
<feature type="lipid moiety-binding region" description="S-diacylglycerol cysteine" evidence="1">
    <location>
        <position position="21"/>
    </location>
</feature>
<dbReference type="EMBL" id="AE004439">
    <property type="protein sequence ID" value="AAK03598.1"/>
    <property type="molecule type" value="Genomic_DNA"/>
</dbReference>
<dbReference type="RefSeq" id="WP_010907200.1">
    <property type="nucleotide sequence ID" value="NC_002663.1"/>
</dbReference>
<dbReference type="STRING" id="272843.PM1514"/>
<dbReference type="EnsemblBacteria" id="AAK03598">
    <property type="protein sequence ID" value="AAK03598"/>
    <property type="gene ID" value="PM1514"/>
</dbReference>
<dbReference type="KEGG" id="pmu:PM1514"/>
<dbReference type="PATRIC" id="fig|272843.6.peg.1530"/>
<dbReference type="HOGENOM" id="CLU_820965_0_0_6"/>
<dbReference type="OrthoDB" id="10006514at2"/>
<dbReference type="Proteomes" id="UP000000809">
    <property type="component" value="Chromosome"/>
</dbReference>
<dbReference type="GO" id="GO:0009279">
    <property type="term" value="C:cell outer membrane"/>
    <property type="evidence" value="ECO:0007669"/>
    <property type="project" value="UniProtKB-SubCell"/>
</dbReference>
<dbReference type="GO" id="GO:0009986">
    <property type="term" value="C:cell surface"/>
    <property type="evidence" value="ECO:0007669"/>
    <property type="project" value="UniProtKB-SubCell"/>
</dbReference>
<dbReference type="PROSITE" id="PS51257">
    <property type="entry name" value="PROKAR_LIPOPROTEIN"/>
    <property type="match status" value="1"/>
</dbReference>
<protein>
    <recommendedName>
        <fullName>Outer membrane lipoprotein PM1514</fullName>
    </recommendedName>
</protein>
<sequence>MQYFDIKKSLPVFCSLLITACSGGGGGGSNNSNHQAHPVNQVPAPVLHVAAKPQQHVEQEVIEKKPPVPVTRTASQSSFYSAKAPSQVSHDKRSVHWKGESVSEKEHLDFSYSKDAVFTRHLVTNPNAVYSTDPNLISKDIKYITLTTTGYNQDNKSGPNYELNLLDENIYYGYYRDSQDMNHVENIYVYGFKKDAENQDNLQFLTANYQGEFLFSTATNPNVPVLGKAVLNYKEGKAKGEILERDSNYKLFDIYVNERPNQAILNPVAERLPTSDLIMNTRKNSPDRVTIDLHFIKGQDNQENKYIVGQGGNEKYWGVLGLEKKETKAEK</sequence>
<keyword id="KW-0998">Cell outer membrane</keyword>
<keyword id="KW-0449">Lipoprotein</keyword>
<keyword id="KW-0472">Membrane</keyword>
<keyword id="KW-0564">Palmitate</keyword>
<keyword id="KW-1185">Reference proteome</keyword>
<keyword id="KW-0732">Signal</keyword>
<name>Y1514_PASMU</name>
<reference key="1">
    <citation type="journal article" date="2001" name="Proc. Natl. Acad. Sci. U.S.A.">
        <title>Complete genomic sequence of Pasteurella multocida Pm70.</title>
        <authorList>
            <person name="May B.J."/>
            <person name="Zhang Q."/>
            <person name="Li L.L."/>
            <person name="Paustian M.L."/>
            <person name="Whittam T.S."/>
            <person name="Kapur V."/>
        </authorList>
    </citation>
    <scope>NUCLEOTIDE SEQUENCE [LARGE SCALE GENOMIC DNA]</scope>
    <source>
        <strain>Pm70</strain>
    </source>
</reference>
<reference key="2">
    <citation type="journal article" date="2017" name="Front. Cell. Infect. Microbiol.">
        <title>Identification of a Large Family of Slam-Dependent Surface Lipoproteins in Gram-Negative Bacteria.</title>
        <authorList>
            <person name="Hooda Y."/>
            <person name="Lai C.C.L."/>
            <person name="Moraes T.F."/>
        </authorList>
    </citation>
    <scope>SUBCELLULAR LOCATION</scope>
    <source>
        <strain>Pm70</strain>
    </source>
</reference>
<proteinExistence type="inferred from homology"/>
<accession>Q9CKU2</accession>
<comment type="subcellular location">
    <subcellularLocation>
        <location evidence="1 2">Cell outer membrane</location>
        <topology evidence="1">Lipid-anchor</topology>
    </subcellularLocation>
    <subcellularLocation>
        <location evidence="2">Cell surface</location>
    </subcellularLocation>
    <text evidence="2">When expressed in E.coli, requires Slam for correct expression on the cell surface.</text>
</comment>
<evidence type="ECO:0000255" key="1">
    <source>
        <dbReference type="PROSITE-ProRule" id="PRU00303"/>
    </source>
</evidence>
<evidence type="ECO:0000269" key="2">
    <source>
    </source>
</evidence>